<comment type="function">
    <text evidence="1">Inhibits the chaperone activity of HSP70/HSC70 by promoting substrate release.</text>
</comment>
<comment type="subunit">
    <text evidence="1">Binds to the ATPase domain of HSP70/HSC chaperones.</text>
</comment>
<proteinExistence type="evidence at protein level"/>
<keyword id="KW-0143">Chaperone</keyword>
<keyword id="KW-0597">Phosphoprotein</keyword>
<keyword id="KW-1185">Reference proteome</keyword>
<evidence type="ECO:0000250" key="1"/>
<evidence type="ECO:0000255" key="2">
    <source>
        <dbReference type="PROSITE-ProRule" id="PRU00369"/>
    </source>
</evidence>
<evidence type="ECO:0000269" key="3">
    <source>
    </source>
</evidence>
<accession>O59739</accession>
<feature type="chain" id="PRO_0000088880" description="BAG family molecular chaperone regulator 1B">
    <location>
        <begin position="1"/>
        <end position="206"/>
    </location>
</feature>
<feature type="domain" description="BAG" evidence="2">
    <location>
        <begin position="122"/>
        <end position="202"/>
    </location>
</feature>
<feature type="modified residue" description="Phosphoserine" evidence="3">
    <location>
        <position position="144"/>
    </location>
</feature>
<gene>
    <name type="primary">bag102</name>
    <name type="synonym">bag1-b</name>
    <name type="ORF">SPBC530.03c</name>
</gene>
<reference key="1">
    <citation type="journal article" date="1999" name="J. Biol. Chem.">
        <title>An evolutionarily conserved family of Hsp70/Hsc70 molecular chaperone regulators.</title>
        <authorList>
            <person name="Takayama S."/>
            <person name="Xie Z."/>
            <person name="Reed J.C."/>
        </authorList>
    </citation>
    <scope>NUCLEOTIDE SEQUENCE [MRNA]</scope>
</reference>
<reference key="2">
    <citation type="journal article" date="2002" name="Nature">
        <title>The genome sequence of Schizosaccharomyces pombe.</title>
        <authorList>
            <person name="Wood V."/>
            <person name="Gwilliam R."/>
            <person name="Rajandream M.A."/>
            <person name="Lyne M.H."/>
            <person name="Lyne R."/>
            <person name="Stewart A."/>
            <person name="Sgouros J.G."/>
            <person name="Peat N."/>
            <person name="Hayles J."/>
            <person name="Baker S.G."/>
            <person name="Basham D."/>
            <person name="Bowman S."/>
            <person name="Brooks K."/>
            <person name="Brown D."/>
            <person name="Brown S."/>
            <person name="Chillingworth T."/>
            <person name="Churcher C.M."/>
            <person name="Collins M."/>
            <person name="Connor R."/>
            <person name="Cronin A."/>
            <person name="Davis P."/>
            <person name="Feltwell T."/>
            <person name="Fraser A."/>
            <person name="Gentles S."/>
            <person name="Goble A."/>
            <person name="Hamlin N."/>
            <person name="Harris D.E."/>
            <person name="Hidalgo J."/>
            <person name="Hodgson G."/>
            <person name="Holroyd S."/>
            <person name="Hornsby T."/>
            <person name="Howarth S."/>
            <person name="Huckle E.J."/>
            <person name="Hunt S."/>
            <person name="Jagels K."/>
            <person name="James K.D."/>
            <person name="Jones L."/>
            <person name="Jones M."/>
            <person name="Leather S."/>
            <person name="McDonald S."/>
            <person name="McLean J."/>
            <person name="Mooney P."/>
            <person name="Moule S."/>
            <person name="Mungall K.L."/>
            <person name="Murphy L.D."/>
            <person name="Niblett D."/>
            <person name="Odell C."/>
            <person name="Oliver K."/>
            <person name="O'Neil S."/>
            <person name="Pearson D."/>
            <person name="Quail M.A."/>
            <person name="Rabbinowitsch E."/>
            <person name="Rutherford K.M."/>
            <person name="Rutter S."/>
            <person name="Saunders D."/>
            <person name="Seeger K."/>
            <person name="Sharp S."/>
            <person name="Skelton J."/>
            <person name="Simmonds M.N."/>
            <person name="Squares R."/>
            <person name="Squares S."/>
            <person name="Stevens K."/>
            <person name="Taylor K."/>
            <person name="Taylor R.G."/>
            <person name="Tivey A."/>
            <person name="Walsh S.V."/>
            <person name="Warren T."/>
            <person name="Whitehead S."/>
            <person name="Woodward J.R."/>
            <person name="Volckaert G."/>
            <person name="Aert R."/>
            <person name="Robben J."/>
            <person name="Grymonprez B."/>
            <person name="Weltjens I."/>
            <person name="Vanstreels E."/>
            <person name="Rieger M."/>
            <person name="Schaefer M."/>
            <person name="Mueller-Auer S."/>
            <person name="Gabel C."/>
            <person name="Fuchs M."/>
            <person name="Duesterhoeft A."/>
            <person name="Fritzc C."/>
            <person name="Holzer E."/>
            <person name="Moestl D."/>
            <person name="Hilbert H."/>
            <person name="Borzym K."/>
            <person name="Langer I."/>
            <person name="Beck A."/>
            <person name="Lehrach H."/>
            <person name="Reinhardt R."/>
            <person name="Pohl T.M."/>
            <person name="Eger P."/>
            <person name="Zimmermann W."/>
            <person name="Wedler H."/>
            <person name="Wambutt R."/>
            <person name="Purnelle B."/>
            <person name="Goffeau A."/>
            <person name="Cadieu E."/>
            <person name="Dreano S."/>
            <person name="Gloux S."/>
            <person name="Lelaure V."/>
            <person name="Mottier S."/>
            <person name="Galibert F."/>
            <person name="Aves S.J."/>
            <person name="Xiang Z."/>
            <person name="Hunt C."/>
            <person name="Moore K."/>
            <person name="Hurst S.M."/>
            <person name="Lucas M."/>
            <person name="Rochet M."/>
            <person name="Gaillardin C."/>
            <person name="Tallada V.A."/>
            <person name="Garzon A."/>
            <person name="Thode G."/>
            <person name="Daga R.R."/>
            <person name="Cruzado L."/>
            <person name="Jimenez J."/>
            <person name="Sanchez M."/>
            <person name="del Rey F."/>
            <person name="Benito J."/>
            <person name="Dominguez A."/>
            <person name="Revuelta J.L."/>
            <person name="Moreno S."/>
            <person name="Armstrong J."/>
            <person name="Forsburg S.L."/>
            <person name="Cerutti L."/>
            <person name="Lowe T."/>
            <person name="McCombie W.R."/>
            <person name="Paulsen I."/>
            <person name="Potashkin J."/>
            <person name="Shpakovski G.V."/>
            <person name="Ussery D."/>
            <person name="Barrell B.G."/>
            <person name="Nurse P."/>
        </authorList>
    </citation>
    <scope>NUCLEOTIDE SEQUENCE [LARGE SCALE GENOMIC DNA]</scope>
    <source>
        <strain>972 / ATCC 24843</strain>
    </source>
</reference>
<reference key="3">
    <citation type="journal article" date="2008" name="J. Proteome Res.">
        <title>Phosphoproteome analysis of fission yeast.</title>
        <authorList>
            <person name="Wilson-Grady J.T."/>
            <person name="Villen J."/>
            <person name="Gygi S.P."/>
        </authorList>
    </citation>
    <scope>PHOSPHORYLATION [LARGE SCALE ANALYSIS] AT SER-144</scope>
    <scope>IDENTIFICATION BY MASS SPECTROMETRY</scope>
</reference>
<name>BAG1B_SCHPO</name>
<dbReference type="EMBL" id="CU329671">
    <property type="protein sequence ID" value="CAA19169.1"/>
    <property type="molecule type" value="Genomic_DNA"/>
</dbReference>
<dbReference type="EMBL" id="AF095790">
    <property type="protein sequence ID" value="AAD16127.1"/>
    <property type="molecule type" value="mRNA"/>
</dbReference>
<dbReference type="PIR" id="T40519">
    <property type="entry name" value="T40519"/>
</dbReference>
<dbReference type="RefSeq" id="NP_595316.1">
    <property type="nucleotide sequence ID" value="NM_001021223.2"/>
</dbReference>
<dbReference type="SMR" id="O59739"/>
<dbReference type="BioGRID" id="277091">
    <property type="interactions" value="22"/>
</dbReference>
<dbReference type="FunCoup" id="O59739">
    <property type="interactions" value="170"/>
</dbReference>
<dbReference type="STRING" id="284812.O59739"/>
<dbReference type="iPTMnet" id="O59739"/>
<dbReference type="PaxDb" id="4896-SPBC530.03c.1"/>
<dbReference type="EnsemblFungi" id="SPBC530.03c.1">
    <property type="protein sequence ID" value="SPBC530.03c.1:pep"/>
    <property type="gene ID" value="SPBC530.03c"/>
</dbReference>
<dbReference type="GeneID" id="2540564"/>
<dbReference type="KEGG" id="spo:2540564"/>
<dbReference type="PomBase" id="SPBC530.03c">
    <property type="gene designation" value="bag102"/>
</dbReference>
<dbReference type="VEuPathDB" id="FungiDB:SPBC530.03c"/>
<dbReference type="eggNOG" id="KOG4361">
    <property type="taxonomic scope" value="Eukaryota"/>
</dbReference>
<dbReference type="HOGENOM" id="CLU_1300318_0_0_1"/>
<dbReference type="InParanoid" id="O59739"/>
<dbReference type="OMA" id="QQYCSSP"/>
<dbReference type="Reactome" id="R-SPO-3371453">
    <property type="pathway name" value="Regulation of HSF1-mediated heat shock response"/>
</dbReference>
<dbReference type="PRO" id="PR:O59739"/>
<dbReference type="Proteomes" id="UP000002485">
    <property type="component" value="Chromosome II"/>
</dbReference>
<dbReference type="GO" id="GO:0005737">
    <property type="term" value="C:cytoplasm"/>
    <property type="evidence" value="ECO:0000318"/>
    <property type="project" value="GO_Central"/>
</dbReference>
<dbReference type="GO" id="GO:0005829">
    <property type="term" value="C:cytosol"/>
    <property type="evidence" value="ECO:0000318"/>
    <property type="project" value="GO_Central"/>
</dbReference>
<dbReference type="GO" id="GO:0016020">
    <property type="term" value="C:membrane"/>
    <property type="evidence" value="ECO:0000318"/>
    <property type="project" value="GO_Central"/>
</dbReference>
<dbReference type="GO" id="GO:0031965">
    <property type="term" value="C:nuclear membrane"/>
    <property type="evidence" value="ECO:0000314"/>
    <property type="project" value="PomBase"/>
</dbReference>
<dbReference type="GO" id="GO:0005634">
    <property type="term" value="C:nucleus"/>
    <property type="evidence" value="ECO:0000318"/>
    <property type="project" value="GO_Central"/>
</dbReference>
<dbReference type="GO" id="GO:0000774">
    <property type="term" value="F:adenyl-nucleotide exchange factor activity"/>
    <property type="evidence" value="ECO:0000318"/>
    <property type="project" value="GO_Central"/>
</dbReference>
<dbReference type="GO" id="GO:0051087">
    <property type="term" value="F:protein-folding chaperone binding"/>
    <property type="evidence" value="ECO:0000318"/>
    <property type="project" value="GO_Central"/>
</dbReference>
<dbReference type="GO" id="GO:0071630">
    <property type="term" value="P:nuclear protein quality control by the ubiquitin-proteasome system"/>
    <property type="evidence" value="ECO:0000315"/>
    <property type="project" value="PomBase"/>
</dbReference>
<dbReference type="GO" id="GO:0006457">
    <property type="term" value="P:protein folding"/>
    <property type="evidence" value="ECO:0000269"/>
    <property type="project" value="PomBase"/>
</dbReference>
<dbReference type="GO" id="GO:0050821">
    <property type="term" value="P:protein stabilization"/>
    <property type="evidence" value="ECO:0000318"/>
    <property type="project" value="GO_Central"/>
</dbReference>
<dbReference type="Gene3D" id="1.20.58.120">
    <property type="entry name" value="BAG domain"/>
    <property type="match status" value="1"/>
</dbReference>
<dbReference type="InterPro" id="IPR039773">
    <property type="entry name" value="BAG_chaperone_regulator"/>
</dbReference>
<dbReference type="InterPro" id="IPR036533">
    <property type="entry name" value="BAG_dom_sf"/>
</dbReference>
<dbReference type="InterPro" id="IPR003103">
    <property type="entry name" value="BAG_domain"/>
</dbReference>
<dbReference type="PANTHER" id="PTHR12329:SF16">
    <property type="entry name" value="BAG FAMILY MOLECULAR CHAPERONE REGULATOR 1"/>
    <property type="match status" value="1"/>
</dbReference>
<dbReference type="PANTHER" id="PTHR12329">
    <property type="entry name" value="BCL2-ASSOCIATED ATHANOGENE"/>
    <property type="match status" value="1"/>
</dbReference>
<dbReference type="Pfam" id="PF02179">
    <property type="entry name" value="BAG"/>
    <property type="match status" value="1"/>
</dbReference>
<dbReference type="SMART" id="SM00264">
    <property type="entry name" value="BAG"/>
    <property type="match status" value="1"/>
</dbReference>
<dbReference type="SUPFAM" id="SSF63491">
    <property type="entry name" value="BAG domain"/>
    <property type="match status" value="1"/>
</dbReference>
<dbReference type="PROSITE" id="PS51035">
    <property type="entry name" value="BAG"/>
    <property type="match status" value="1"/>
</dbReference>
<organism>
    <name type="scientific">Schizosaccharomyces pombe (strain 972 / ATCC 24843)</name>
    <name type="common">Fission yeast</name>
    <dbReference type="NCBI Taxonomy" id="284812"/>
    <lineage>
        <taxon>Eukaryota</taxon>
        <taxon>Fungi</taxon>
        <taxon>Dikarya</taxon>
        <taxon>Ascomycota</taxon>
        <taxon>Taphrinomycotina</taxon>
        <taxon>Schizosaccharomycetes</taxon>
        <taxon>Schizosaccharomycetales</taxon>
        <taxon>Schizosaccharomycetaceae</taxon>
        <taxon>Schizosaccharomyces</taxon>
    </lineage>
</organism>
<sequence length="206" mass="23325">MSFFTQLCSMDKKYWISLAVLSVTVLISALLKKRATETEDIVVVHYDGEKLNFVLRQPRLNMVSYTSFLRRVCNAFSVMPDKASLKLNGVTLKDGSLSDQNVQNGSELELELPKLSPAMQQIEAYIDELQQDLVPKIEAFCQSSPASAQDVQDLHTRLSETLLARMIKLDAVNVEDDPEARLKRKEAIRLSQQYLSKLDSTKNQNK</sequence>
<protein>
    <recommendedName>
        <fullName>BAG family molecular chaperone regulator 1B</fullName>
        <shortName>BAG-1B</shortName>
    </recommendedName>
</protein>